<sequence length="164" mass="17752">MKSVITTVISAADSAGRFPSSSDLESVQGNIQRASARLEAAEKLASNHEAVVKEAGDACFGKYGYLKNPGEAGENQEKINKCYRDIDHYMRLVNYSLVIGGTGPLDEWGIAGAREVYRTLNLPTSAYIAAFAFTRDRLCGPRDMSAQAGVEYSTALDYIINSLS</sequence>
<dbReference type="PDB" id="1EYX">
    <property type="method" value="X-ray"/>
    <property type="resolution" value="2.25 A"/>
    <property type="chains" value="A/K=1-164"/>
</dbReference>
<dbReference type="PDBsum" id="1EYX"/>
<dbReference type="SMR" id="Q7SIG0"/>
<dbReference type="EvolutionaryTrace" id="Q7SIG0"/>
<dbReference type="GO" id="GO:0009535">
    <property type="term" value="C:chloroplast thylakoid membrane"/>
    <property type="evidence" value="ECO:0007669"/>
    <property type="project" value="UniProtKB-SubCell"/>
</dbReference>
<dbReference type="GO" id="GO:0030089">
    <property type="term" value="C:phycobilisome"/>
    <property type="evidence" value="ECO:0007669"/>
    <property type="project" value="UniProtKB-KW"/>
</dbReference>
<dbReference type="GO" id="GO:0015979">
    <property type="term" value="P:photosynthesis"/>
    <property type="evidence" value="ECO:0007669"/>
    <property type="project" value="UniProtKB-KW"/>
</dbReference>
<dbReference type="CDD" id="cd14769">
    <property type="entry name" value="PE_alpha"/>
    <property type="match status" value="1"/>
</dbReference>
<dbReference type="Gene3D" id="1.10.490.20">
    <property type="entry name" value="Phycocyanins"/>
    <property type="match status" value="1"/>
</dbReference>
<dbReference type="InterPro" id="IPR009050">
    <property type="entry name" value="Globin-like_sf"/>
</dbReference>
<dbReference type="InterPro" id="IPR012128">
    <property type="entry name" value="Phycobilisome_asu/bsu"/>
</dbReference>
<dbReference type="InterPro" id="IPR038719">
    <property type="entry name" value="Phycobilisome_asu/bsu_sf"/>
</dbReference>
<dbReference type="PANTHER" id="PTHR34011:SF4">
    <property type="entry name" value="C-PHYCOCYANIN ALPHA SUBUNIT"/>
    <property type="match status" value="1"/>
</dbReference>
<dbReference type="PANTHER" id="PTHR34011">
    <property type="entry name" value="PHYCOBILISOME 32.1 KDA LINKER POLYPEPTIDE, PHYCOCYANIN-ASSOCIATED, ROD 2-RELATED"/>
    <property type="match status" value="1"/>
</dbReference>
<dbReference type="Pfam" id="PF00502">
    <property type="entry name" value="Phycobilisome"/>
    <property type="match status" value="1"/>
</dbReference>
<dbReference type="PIRSF" id="PIRSF000081">
    <property type="entry name" value="Phycocyanin"/>
    <property type="match status" value="1"/>
</dbReference>
<dbReference type="SUPFAM" id="SSF46458">
    <property type="entry name" value="Globin-like"/>
    <property type="match status" value="1"/>
</dbReference>
<organism>
    <name type="scientific">Agarophyton chilense</name>
    <name type="common">Red seaweed</name>
    <name type="synonym">Gracilaria chilensis</name>
    <dbReference type="NCBI Taxonomy" id="2510777"/>
    <lineage>
        <taxon>Eukaryota</taxon>
        <taxon>Rhodophyta</taxon>
        <taxon>Florideophyceae</taxon>
        <taxon>Rhodymeniophycidae</taxon>
        <taxon>Gracilariales</taxon>
        <taxon>Gracilariaceae</taxon>
        <taxon>Agarophyton</taxon>
    </lineage>
</organism>
<reference evidence="3 4" key="1">
    <citation type="journal article" date="2001" name="Acta Crystallogr. D">
        <title>Crystallization and 2.2 A resolution structure of R-phycoerythrin from Gracilaria chilensis: a case of perfect hemihedral twinning.</title>
        <authorList>
            <person name="Contreras-Martel C."/>
            <person name="Martinez-Oyanedel J."/>
            <person name="Bunster M."/>
            <person name="Legrand P."/>
            <person name="Piras C."/>
            <person name="Vernede X."/>
            <person name="Fontecilla-Camps J.-C."/>
        </authorList>
    </citation>
    <scope>X-RAY CRYSTALLOGRAPHY (2.25 ANGSTROMS) IN COMPLEX WITH PHYCOERYTHROBILIN AND PHEB</scope>
    <scope>FUNCTION</scope>
    <scope>SUBUNIT</scope>
</reference>
<keyword id="KW-0002">3D-structure</keyword>
<keyword id="KW-0042">Antenna complex</keyword>
<keyword id="KW-0089">Bile pigment</keyword>
<keyword id="KW-0150">Chloroplast</keyword>
<keyword id="KW-0157">Chromophore</keyword>
<keyword id="KW-0249">Electron transport</keyword>
<keyword id="KW-0472">Membrane</keyword>
<keyword id="KW-0602">Photosynthesis</keyword>
<keyword id="KW-0605">Phycobilisome</keyword>
<keyword id="KW-0934">Plastid</keyword>
<keyword id="KW-0793">Thylakoid</keyword>
<keyword id="KW-0813">Transport</keyword>
<name>PHEA_AGACH</name>
<proteinExistence type="evidence at protein level"/>
<protein>
    <recommendedName>
        <fullName>R-phycoerythrin alpha chain</fullName>
    </recommendedName>
</protein>
<evidence type="ECO:0000255" key="1"/>
<evidence type="ECO:0000269" key="2">
    <source>
    </source>
</evidence>
<evidence type="ECO:0000305" key="3"/>
<evidence type="ECO:0000312" key="4">
    <source>
        <dbReference type="PDB" id="1EYX"/>
    </source>
</evidence>
<evidence type="ECO:0007829" key="5">
    <source>
        <dbReference type="PDB" id="1EYX"/>
    </source>
</evidence>
<geneLocation type="chloroplast"/>
<gene>
    <name type="primary">rpeA</name>
</gene>
<accession>Q7SIG0</accession>
<feature type="chain" id="PRO_0000239447" description="R-phycoerythrin alpha chain">
    <location>
        <begin position="1"/>
        <end position="164"/>
    </location>
</feature>
<feature type="binding site" evidence="2">
    <location>
        <position position="47"/>
    </location>
    <ligand>
        <name>(2R,3E)-phycoerythrobilin</name>
        <dbReference type="ChEBI" id="CHEBI:85276"/>
        <label>2</label>
    </ligand>
</feature>
<feature type="binding site" evidence="2">
    <location>
        <position position="81"/>
    </location>
    <ligand>
        <name>(2R,3E)-phycoerythrobilin</name>
        <dbReference type="ChEBI" id="CHEBI:85276"/>
        <label>1</label>
    </ligand>
</feature>
<feature type="binding site" description="covalent" evidence="2">
    <location>
        <position position="82"/>
    </location>
    <ligand>
        <name>(2R,3E)-phycoerythrobilin</name>
        <dbReference type="ChEBI" id="CHEBI:85276"/>
        <label>1</label>
    </ligand>
</feature>
<feature type="binding site" evidence="2">
    <location>
        <position position="84"/>
    </location>
    <ligand>
        <name>(2R,3E)-phycoerythrobilin</name>
        <dbReference type="ChEBI" id="CHEBI:85276"/>
        <label>1</label>
    </ligand>
</feature>
<feature type="binding site" evidence="2">
    <location>
        <position position="88"/>
    </location>
    <ligand>
        <name>(2R,3E)-phycoerythrobilin</name>
        <dbReference type="ChEBI" id="CHEBI:85276"/>
        <label>1</label>
    </ligand>
</feature>
<feature type="binding site" evidence="2">
    <location>
        <position position="137"/>
    </location>
    <ligand>
        <name>(2R,3E)-phycoerythrobilin</name>
        <dbReference type="ChEBI" id="CHEBI:85276"/>
        <label>2</label>
    </ligand>
</feature>
<feature type="binding site" description="covalent" evidence="2">
    <location>
        <position position="139"/>
    </location>
    <ligand>
        <name>(2R,3E)-phycoerythrobilin</name>
        <dbReference type="ChEBI" id="CHEBI:85276"/>
        <label>2</label>
    </ligand>
</feature>
<feature type="binding site" evidence="2">
    <location>
        <position position="142"/>
    </location>
    <ligand>
        <name>(2R,3E)-phycoerythrobilin</name>
        <dbReference type="ChEBI" id="CHEBI:85276"/>
        <label>2</label>
    </ligand>
</feature>
<feature type="helix" evidence="5">
    <location>
        <begin position="4"/>
        <end position="13"/>
    </location>
</feature>
<feature type="turn" evidence="5">
    <location>
        <begin position="14"/>
        <end position="16"/>
    </location>
</feature>
<feature type="helix" evidence="5">
    <location>
        <begin position="21"/>
        <end position="62"/>
    </location>
</feature>
<feature type="helix" evidence="5">
    <location>
        <begin position="64"/>
        <end position="67"/>
    </location>
</feature>
<feature type="strand" evidence="5">
    <location>
        <begin position="71"/>
        <end position="75"/>
    </location>
</feature>
<feature type="helix" evidence="5">
    <location>
        <begin position="76"/>
        <end position="99"/>
    </location>
</feature>
<feature type="helix" evidence="5">
    <location>
        <begin position="103"/>
        <end position="108"/>
    </location>
</feature>
<feature type="turn" evidence="5">
    <location>
        <begin position="109"/>
        <end position="112"/>
    </location>
</feature>
<feature type="helix" evidence="5">
    <location>
        <begin position="113"/>
        <end position="119"/>
    </location>
</feature>
<feature type="helix" evidence="5">
    <location>
        <begin position="124"/>
        <end position="137"/>
    </location>
</feature>
<feature type="turn" evidence="5">
    <location>
        <begin position="140"/>
        <end position="143"/>
    </location>
</feature>
<feature type="helix" evidence="5">
    <location>
        <begin position="148"/>
        <end position="162"/>
    </location>
</feature>
<comment type="function">
    <text evidence="2">Light-harvesting photosynthetic tetrapyrrole chromophore-protein from the phycobiliprotein complex.</text>
</comment>
<comment type="subunit">
    <text evidence="2">Heterododecamer of 6 alpha and 6 beta chains. The basic functional unit of phycobiliproteins is a ring-shaped hexamer formed from two back-to-back trimers contacting via the alpha chain subunits. The trimers are composed of alpha/beta subunit heterodimers arranged around a three-fold axis of symmetry. The phycoerythrins also contain a gamma subunit which is located in the center of the hexamer.</text>
</comment>
<comment type="subcellular location">
    <subcellularLocation>
        <location>Plastid</location>
        <location>Chloroplast thylakoid membrane</location>
        <topology>Peripheral membrane protein</topology>
        <orientation>Stromal side</orientation>
    </subcellularLocation>
    <text>Forms the periphery of the phycobilisome rod.</text>
</comment>
<comment type="PTM">
    <text>Contains two covalently linked phycoerythrobilin chromophores.</text>
</comment>
<comment type="miscellaneous">
    <text>The light-harvesting antenna system in red algae and cyanobacteria is formed of phycobilisomes. These are composed of the phycobiliproteins phycoerythrin (CPE), phycocyanin (CPC) and allophycocyanin (APC). Cyanobacteria also contain phycoerythrocyanin (PCC). The phycobiliproteins all share the same subunit composition and organization with variations in the covalently bound open-chain tetrapyrrole chromophores. The phycobiliprotein complexes are arranged sequentially in antenna complexes linked by linker proteins with CPE at the periphery, CPC in the middle and APC at the core feeding to the photosynthetic reaction center.</text>
</comment>
<comment type="similarity">
    <text evidence="1">Belongs to the phycobiliprotein family.</text>
</comment>